<keyword id="KW-1015">Disulfide bond</keyword>
<keyword id="KW-0964">Secreted</keyword>
<keyword id="KW-0732">Signal</keyword>
<keyword id="KW-0800">Toxin</keyword>
<organism>
    <name type="scientific">Cormocephalus westwoodi</name>
    <name type="common">Westwood's green centipede</name>
    <dbReference type="NCBI Taxonomy" id="1096223"/>
    <lineage>
        <taxon>Eukaryota</taxon>
        <taxon>Metazoa</taxon>
        <taxon>Ecdysozoa</taxon>
        <taxon>Arthropoda</taxon>
        <taxon>Myriapoda</taxon>
        <taxon>Chilopoda</taxon>
        <taxon>Pleurostigmophora</taxon>
        <taxon>Scolopendromorpha</taxon>
        <taxon>Scolopendridae</taxon>
        <taxon>Cormocephalus</taxon>
    </lineage>
</organism>
<protein>
    <recommendedName>
        <fullName evidence="2">U-scoloptoxin(16)-Cw1a</fullName>
        <shortName evidence="2">U-SLPTX(16)-Cw1a</shortName>
    </recommendedName>
</protein>
<accession>P0DQE2</accession>
<comment type="subcellular location">
    <subcellularLocation>
        <location evidence="4">Secreted</location>
    </subcellularLocation>
</comment>
<comment type="tissue specificity">
    <text evidence="4">Expressed by the venom gland.</text>
</comment>
<comment type="PTM">
    <text evidence="3">Contains 4 disulfide bonds.</text>
</comment>
<comment type="similarity">
    <text evidence="3">Belongs to the scoloptoxin-16 family.</text>
</comment>
<comment type="online information" name="National Center for Biotechnology Information (NCBI)">
    <link uri="https://www.ncbi.nlm.nih.gov/nuccore/GASL01000045"/>
</comment>
<feature type="signal peptide" evidence="1">
    <location>
        <begin position="1"/>
        <end position="21"/>
    </location>
</feature>
<feature type="chain" id="PRO_0000446801" description="U-scoloptoxin(16)-Cw1a" evidence="3">
    <location>
        <begin position="22"/>
        <end position="109"/>
    </location>
</feature>
<name>TXG1A_CORWE</name>
<sequence length="109" mass="12154">MNAVFIVFLSAILSYPHESFAEELATKHKHVEHCLGSDGEGHPLNEFWYDDGMCQRFYCFRDDEGIIYEQITNCPIAIAEGDCKINPGTAGSYPDCCPTVICPDSPKAF</sequence>
<dbReference type="GO" id="GO:0005576">
    <property type="term" value="C:extracellular region"/>
    <property type="evidence" value="ECO:0007669"/>
    <property type="project" value="UniProtKB-SubCell"/>
</dbReference>
<dbReference type="GO" id="GO:0090729">
    <property type="term" value="F:toxin activity"/>
    <property type="evidence" value="ECO:0007669"/>
    <property type="project" value="UniProtKB-KW"/>
</dbReference>
<dbReference type="InterPro" id="IPR029277">
    <property type="entry name" value="SVWC_dom"/>
</dbReference>
<dbReference type="Pfam" id="PF15430">
    <property type="entry name" value="SVWC"/>
    <property type="match status" value="1"/>
</dbReference>
<dbReference type="SMART" id="SM01318">
    <property type="entry name" value="SVWC"/>
    <property type="match status" value="1"/>
</dbReference>
<evidence type="ECO:0000255" key="1"/>
<evidence type="ECO:0000303" key="2">
    <source>
    </source>
</evidence>
<evidence type="ECO:0000305" key="3"/>
<evidence type="ECO:0000305" key="4">
    <source>
    </source>
</evidence>
<reference key="1">
    <citation type="journal article" date="2014" name="Mol. Biol. Evol.">
        <title>Clawing through evolution: toxin diversification and convergence in the ancient lineage Chilopoda (centipedes).</title>
        <authorList>
            <person name="Undheim E.A."/>
            <person name="Jones A."/>
            <person name="Clauser K.R."/>
            <person name="Holland J.W."/>
            <person name="Pineda S.S."/>
            <person name="King G.F."/>
            <person name="Fry B.G."/>
        </authorList>
    </citation>
    <scope>NUCLEOTIDE SEQUENCE [MRNA]</scope>
    <scope>NOMENCLATURE</scope>
    <source>
        <tissue>Venom gland</tissue>
    </source>
</reference>
<proteinExistence type="inferred from homology"/>